<keyword id="KW-0227">DNA damage</keyword>
<keyword id="KW-0234">DNA repair</keyword>
<keyword id="KW-0238">DNA-binding</keyword>
<keyword id="KW-0479">Metal-binding</keyword>
<keyword id="KW-0539">Nucleus</keyword>
<keyword id="KW-1185">Reference proteome</keyword>
<keyword id="KW-0808">Transferase</keyword>
<keyword id="KW-0833">Ubl conjugation pathway</keyword>
<keyword id="KW-0862">Zinc</keyword>
<keyword id="KW-0863">Zinc-finger</keyword>
<comment type="function">
    <text evidence="1">E3 RING-finger protein, member of the UBC2/RAD6 epistasis group. Associates to the E2 ubiquitin conjugating enzyme UBC2/RAD6 to form the UBC2-RAD18 ubiquitin ligase complex involved in postreplicative repair (PRR) of damaged DNA.</text>
</comment>
<comment type="catalytic activity">
    <reaction>
        <text>S-ubiquitinyl-[E2 ubiquitin-conjugating enzyme]-L-cysteine + [acceptor protein]-L-lysine = [E2 ubiquitin-conjugating enzyme]-L-cysteine + N(6)-ubiquitinyl-[acceptor protein]-L-lysine.</text>
        <dbReference type="EC" id="2.3.2.27"/>
    </reaction>
</comment>
<comment type="pathway">
    <text>Protein modification; protein ubiquitination.</text>
</comment>
<comment type="subunit">
    <text evidence="1">Interacts with E2 UBC2, forming a complex with ubiquitin ligase activity.</text>
</comment>
<comment type="subcellular location">
    <subcellularLocation>
        <location evidence="1">Nucleus</location>
    </subcellularLocation>
</comment>
<comment type="similarity">
    <text evidence="6">Belongs to the RAD18 family.</text>
</comment>
<sequence length="411" mass="46771">MDVLTSAADFKKSKVPQLQELDDLLRCHICKDFLKNPVLTPCGHTFCSLCIRGYLSNEPKCPLCLHELRESMLRSEYLVNEITETYKAARQRLLDELNSLETNQDNSVIEVVSDKEPSLLQIDDDVNENSNHITVNDTSDIIDEDNEIQITGTKRTARTILNGSRPTKAAKISDMFTTRKAKTEEKAPCPICSQLFPIRYLERTHLDECLTKPPTSSPPIKQSRLSPKPSESVSHVKRYLNSTNTSTQQRLPKLNFAKMTTSQLKQKLASLSLPVSGTRANMVARYNYYEMLWNSNFIDSINPVSESELRRQLMSWDASHNGNNNSSNGGTNTISQLMKMNSKNKGKEYEKLLKDFKKDSFDKKGWMLLHKNSFNRLLCDAKKTRRKTENETLMTSQSPRESSTQTELSAT</sequence>
<reference key="1">
    <citation type="journal article" date="2004" name="Nature">
        <title>Genome evolution in yeasts.</title>
        <authorList>
            <person name="Dujon B."/>
            <person name="Sherman D."/>
            <person name="Fischer G."/>
            <person name="Durrens P."/>
            <person name="Casaregola S."/>
            <person name="Lafontaine I."/>
            <person name="de Montigny J."/>
            <person name="Marck C."/>
            <person name="Neuveglise C."/>
            <person name="Talla E."/>
            <person name="Goffard N."/>
            <person name="Frangeul L."/>
            <person name="Aigle M."/>
            <person name="Anthouard V."/>
            <person name="Babour A."/>
            <person name="Barbe V."/>
            <person name="Barnay S."/>
            <person name="Blanchin S."/>
            <person name="Beckerich J.-M."/>
            <person name="Beyne E."/>
            <person name="Bleykasten C."/>
            <person name="Boisrame A."/>
            <person name="Boyer J."/>
            <person name="Cattolico L."/>
            <person name="Confanioleri F."/>
            <person name="de Daruvar A."/>
            <person name="Despons L."/>
            <person name="Fabre E."/>
            <person name="Fairhead C."/>
            <person name="Ferry-Dumazet H."/>
            <person name="Groppi A."/>
            <person name="Hantraye F."/>
            <person name="Hennequin C."/>
            <person name="Jauniaux N."/>
            <person name="Joyet P."/>
            <person name="Kachouri R."/>
            <person name="Kerrest A."/>
            <person name="Koszul R."/>
            <person name="Lemaire M."/>
            <person name="Lesur I."/>
            <person name="Ma L."/>
            <person name="Muller H."/>
            <person name="Nicaud J.-M."/>
            <person name="Nikolski M."/>
            <person name="Oztas S."/>
            <person name="Ozier-Kalogeropoulos O."/>
            <person name="Pellenz S."/>
            <person name="Potier S."/>
            <person name="Richard G.-F."/>
            <person name="Straub M.-L."/>
            <person name="Suleau A."/>
            <person name="Swennen D."/>
            <person name="Tekaia F."/>
            <person name="Wesolowski-Louvel M."/>
            <person name="Westhof E."/>
            <person name="Wirth B."/>
            <person name="Zeniou-Meyer M."/>
            <person name="Zivanovic Y."/>
            <person name="Bolotin-Fukuhara M."/>
            <person name="Thierry A."/>
            <person name="Bouchier C."/>
            <person name="Caudron B."/>
            <person name="Scarpelli C."/>
            <person name="Gaillardin C."/>
            <person name="Weissenbach J."/>
            <person name="Wincker P."/>
            <person name="Souciet J.-L."/>
        </authorList>
    </citation>
    <scope>NUCLEOTIDE SEQUENCE [LARGE SCALE GENOMIC DNA]</scope>
    <source>
        <strain>ATCC 2001 / BCRC 20586 / JCM 3761 / NBRC 0622 / NRRL Y-65 / CBS 138</strain>
    </source>
</reference>
<proteinExistence type="inferred from homology"/>
<name>RAD18_CANGA</name>
<accession>Q6FPI4</accession>
<organism>
    <name type="scientific">Candida glabrata (strain ATCC 2001 / BCRC 20586 / JCM 3761 / NBRC 0622 / NRRL Y-65 / CBS 138)</name>
    <name type="common">Yeast</name>
    <name type="synonym">Nakaseomyces glabratus</name>
    <dbReference type="NCBI Taxonomy" id="284593"/>
    <lineage>
        <taxon>Eukaryota</taxon>
        <taxon>Fungi</taxon>
        <taxon>Dikarya</taxon>
        <taxon>Ascomycota</taxon>
        <taxon>Saccharomycotina</taxon>
        <taxon>Saccharomycetes</taxon>
        <taxon>Saccharomycetales</taxon>
        <taxon>Saccharomycetaceae</taxon>
        <taxon>Nakaseomyces</taxon>
    </lineage>
</organism>
<gene>
    <name type="primary">RAD18</name>
    <name type="ordered locus">CAGL0J03586g</name>
</gene>
<evidence type="ECO:0000250" key="1"/>
<evidence type="ECO:0000255" key="2">
    <source>
        <dbReference type="PROSITE-ProRule" id="PRU00175"/>
    </source>
</evidence>
<evidence type="ECO:0000255" key="3">
    <source>
        <dbReference type="PROSITE-ProRule" id="PRU00186"/>
    </source>
</evidence>
<evidence type="ECO:0000255" key="4">
    <source>
        <dbReference type="PROSITE-ProRule" id="PRU01256"/>
    </source>
</evidence>
<evidence type="ECO:0000256" key="5">
    <source>
        <dbReference type="SAM" id="MobiDB-lite"/>
    </source>
</evidence>
<evidence type="ECO:0000305" key="6"/>
<feature type="chain" id="PRO_0000056154" description="Postreplication repair E3 ubiquitin-protein ligase RAD18">
    <location>
        <begin position="1"/>
        <end position="411"/>
    </location>
</feature>
<feature type="domain" description="SAP" evidence="3">
    <location>
        <begin position="256"/>
        <end position="290"/>
    </location>
</feature>
<feature type="zinc finger region" description="RING-type" evidence="2">
    <location>
        <begin position="27"/>
        <end position="65"/>
    </location>
</feature>
<feature type="zinc finger region" description="UBZ4-type" evidence="4">
    <location>
        <begin position="186"/>
        <end position="214"/>
    </location>
</feature>
<feature type="region of interest" description="Disordered" evidence="5">
    <location>
        <begin position="209"/>
        <end position="234"/>
    </location>
</feature>
<feature type="region of interest" description="Disordered" evidence="5">
    <location>
        <begin position="385"/>
        <end position="411"/>
    </location>
</feature>
<feature type="compositionally biased region" description="Polar residues" evidence="5">
    <location>
        <begin position="218"/>
        <end position="233"/>
    </location>
</feature>
<feature type="compositionally biased region" description="Polar residues" evidence="5">
    <location>
        <begin position="391"/>
        <end position="411"/>
    </location>
</feature>
<feature type="binding site" evidence="4">
    <location>
        <position position="189"/>
    </location>
    <ligand>
        <name>Zn(2+)</name>
        <dbReference type="ChEBI" id="CHEBI:29105"/>
    </ligand>
</feature>
<feature type="binding site" evidence="4">
    <location>
        <position position="192"/>
    </location>
    <ligand>
        <name>Zn(2+)</name>
        <dbReference type="ChEBI" id="CHEBI:29105"/>
    </ligand>
</feature>
<feature type="binding site" evidence="4">
    <location>
        <position position="205"/>
    </location>
    <ligand>
        <name>Zn(2+)</name>
        <dbReference type="ChEBI" id="CHEBI:29105"/>
    </ligand>
</feature>
<feature type="binding site" evidence="4">
    <location>
        <position position="209"/>
    </location>
    <ligand>
        <name>Zn(2+)</name>
        <dbReference type="ChEBI" id="CHEBI:29105"/>
    </ligand>
</feature>
<protein>
    <recommendedName>
        <fullName>Postreplication repair E3 ubiquitin-protein ligase RAD18</fullName>
        <ecNumber>2.3.2.27</ecNumber>
    </recommendedName>
    <alternativeName>
        <fullName evidence="6">RING-type E3 ubiquitin transferase RAD18</fullName>
    </alternativeName>
</protein>
<dbReference type="EC" id="2.3.2.27"/>
<dbReference type="EMBL" id="CR380956">
    <property type="protein sequence ID" value="CAG60809.1"/>
    <property type="molecule type" value="Genomic_DNA"/>
</dbReference>
<dbReference type="RefSeq" id="XP_447860.1">
    <property type="nucleotide sequence ID" value="XM_447860.1"/>
</dbReference>
<dbReference type="SMR" id="Q6FPI4"/>
<dbReference type="FunCoup" id="Q6FPI4">
    <property type="interactions" value="328"/>
</dbReference>
<dbReference type="STRING" id="284593.Q6FPI4"/>
<dbReference type="EnsemblFungi" id="CAGL0J03586g-T">
    <property type="protein sequence ID" value="CAGL0J03586g-T-p1"/>
    <property type="gene ID" value="CAGL0J03586g"/>
</dbReference>
<dbReference type="KEGG" id="cgr:2889701"/>
<dbReference type="CGD" id="CAL0133446">
    <property type="gene designation" value="CAGL0J03586g"/>
</dbReference>
<dbReference type="VEuPathDB" id="FungiDB:CAGL0J03586g"/>
<dbReference type="eggNOG" id="KOG0287">
    <property type="taxonomic scope" value="Eukaryota"/>
</dbReference>
<dbReference type="HOGENOM" id="CLU_028491_2_0_1"/>
<dbReference type="InParanoid" id="Q6FPI4"/>
<dbReference type="OMA" id="IPNTGPR"/>
<dbReference type="UniPathway" id="UPA00143"/>
<dbReference type="Proteomes" id="UP000002428">
    <property type="component" value="Chromosome J"/>
</dbReference>
<dbReference type="GO" id="GO:0000785">
    <property type="term" value="C:chromatin"/>
    <property type="evidence" value="ECO:0007669"/>
    <property type="project" value="EnsemblFungi"/>
</dbReference>
<dbReference type="GO" id="GO:0005634">
    <property type="term" value="C:nucleus"/>
    <property type="evidence" value="ECO:0007669"/>
    <property type="project" value="UniProtKB-SubCell"/>
</dbReference>
<dbReference type="GO" id="GO:0097505">
    <property type="term" value="C:Rad6-Rad18 complex"/>
    <property type="evidence" value="ECO:0007669"/>
    <property type="project" value="EnsemblFungi"/>
</dbReference>
<dbReference type="GO" id="GO:0003697">
    <property type="term" value="F:single-stranded DNA binding"/>
    <property type="evidence" value="ECO:0007669"/>
    <property type="project" value="EnsemblFungi"/>
</dbReference>
<dbReference type="GO" id="GO:0017116">
    <property type="term" value="F:single-stranded DNA helicase activity"/>
    <property type="evidence" value="ECO:0007669"/>
    <property type="project" value="EnsemblFungi"/>
</dbReference>
<dbReference type="GO" id="GO:0061630">
    <property type="term" value="F:ubiquitin protein ligase activity"/>
    <property type="evidence" value="ECO:0007669"/>
    <property type="project" value="InterPro"/>
</dbReference>
<dbReference type="GO" id="GO:0008270">
    <property type="term" value="F:zinc ion binding"/>
    <property type="evidence" value="ECO:0007669"/>
    <property type="project" value="UniProtKB-KW"/>
</dbReference>
<dbReference type="GO" id="GO:0042275">
    <property type="term" value="P:error-free postreplication DNA repair"/>
    <property type="evidence" value="ECO:0007669"/>
    <property type="project" value="EnsemblFungi"/>
</dbReference>
<dbReference type="GO" id="GO:0070987">
    <property type="term" value="P:error-free translesion synthesis"/>
    <property type="evidence" value="ECO:0007669"/>
    <property type="project" value="EnsemblFungi"/>
</dbReference>
<dbReference type="GO" id="GO:0042276">
    <property type="term" value="P:error-prone translesion synthesis"/>
    <property type="evidence" value="ECO:0007669"/>
    <property type="project" value="EnsemblFungi"/>
</dbReference>
<dbReference type="GO" id="GO:0006513">
    <property type="term" value="P:protein monoubiquitination"/>
    <property type="evidence" value="ECO:0007669"/>
    <property type="project" value="EnsemblFungi"/>
</dbReference>
<dbReference type="FunFam" id="3.30.40.10:FF:000172">
    <property type="entry name" value="E3 ubiquitin-protein ligase RAD18"/>
    <property type="match status" value="1"/>
</dbReference>
<dbReference type="Gene3D" id="3.30.160.60">
    <property type="entry name" value="Classic Zinc Finger"/>
    <property type="match status" value="1"/>
</dbReference>
<dbReference type="Gene3D" id="1.10.720.30">
    <property type="entry name" value="SAP domain"/>
    <property type="match status" value="1"/>
</dbReference>
<dbReference type="Gene3D" id="3.30.40.10">
    <property type="entry name" value="Zinc/RING finger domain, C3HC4 (zinc finger)"/>
    <property type="match status" value="1"/>
</dbReference>
<dbReference type="InterPro" id="IPR039577">
    <property type="entry name" value="Rad18"/>
</dbReference>
<dbReference type="InterPro" id="IPR004580">
    <property type="entry name" value="Rad18_fungi"/>
</dbReference>
<dbReference type="InterPro" id="IPR006642">
    <property type="entry name" value="Rad18_UBZ4"/>
</dbReference>
<dbReference type="InterPro" id="IPR003034">
    <property type="entry name" value="SAP_dom"/>
</dbReference>
<dbReference type="InterPro" id="IPR036361">
    <property type="entry name" value="SAP_dom_sf"/>
</dbReference>
<dbReference type="InterPro" id="IPR001841">
    <property type="entry name" value="Znf_RING"/>
</dbReference>
<dbReference type="InterPro" id="IPR013083">
    <property type="entry name" value="Znf_RING/FYVE/PHD"/>
</dbReference>
<dbReference type="InterPro" id="IPR017907">
    <property type="entry name" value="Znf_RING_CS"/>
</dbReference>
<dbReference type="NCBIfam" id="TIGR00599">
    <property type="entry name" value="rad18"/>
    <property type="match status" value="1"/>
</dbReference>
<dbReference type="PANTHER" id="PTHR14134">
    <property type="entry name" value="E3 UBIQUITIN-PROTEIN LIGASE RAD18"/>
    <property type="match status" value="1"/>
</dbReference>
<dbReference type="PANTHER" id="PTHR14134:SF2">
    <property type="entry name" value="E3 UBIQUITIN-PROTEIN LIGASE RAD18"/>
    <property type="match status" value="1"/>
</dbReference>
<dbReference type="Pfam" id="PF02037">
    <property type="entry name" value="SAP"/>
    <property type="match status" value="1"/>
</dbReference>
<dbReference type="Pfam" id="PF13923">
    <property type="entry name" value="zf-C3HC4_2"/>
    <property type="match status" value="1"/>
</dbReference>
<dbReference type="SMART" id="SM00184">
    <property type="entry name" value="RING"/>
    <property type="match status" value="1"/>
</dbReference>
<dbReference type="SMART" id="SM00513">
    <property type="entry name" value="SAP"/>
    <property type="match status" value="1"/>
</dbReference>
<dbReference type="SMART" id="SM00734">
    <property type="entry name" value="ZnF_Rad18"/>
    <property type="match status" value="1"/>
</dbReference>
<dbReference type="SUPFAM" id="SSF57850">
    <property type="entry name" value="RING/U-box"/>
    <property type="match status" value="1"/>
</dbReference>
<dbReference type="PROSITE" id="PS50800">
    <property type="entry name" value="SAP"/>
    <property type="match status" value="1"/>
</dbReference>
<dbReference type="PROSITE" id="PS00518">
    <property type="entry name" value="ZF_RING_1"/>
    <property type="match status" value="1"/>
</dbReference>
<dbReference type="PROSITE" id="PS50089">
    <property type="entry name" value="ZF_RING_2"/>
    <property type="match status" value="1"/>
</dbReference>
<dbReference type="PROSITE" id="PS51908">
    <property type="entry name" value="ZF_UBZ4"/>
    <property type="match status" value="1"/>
</dbReference>